<organism>
    <name type="scientific">Schizosaccharomyces pombe (strain 972 / ATCC 24843)</name>
    <name type="common">Fission yeast</name>
    <dbReference type="NCBI Taxonomy" id="284812"/>
    <lineage>
        <taxon>Eukaryota</taxon>
        <taxon>Fungi</taxon>
        <taxon>Dikarya</taxon>
        <taxon>Ascomycota</taxon>
        <taxon>Taphrinomycotina</taxon>
        <taxon>Schizosaccharomycetes</taxon>
        <taxon>Schizosaccharomycetales</taxon>
        <taxon>Schizosaccharomycetaceae</taxon>
        <taxon>Schizosaccharomyces</taxon>
    </lineage>
</organism>
<protein>
    <recommendedName>
        <fullName evidence="1">Probable glutathione-independent glyoxalase hsp3103</fullName>
        <ecNumber evidence="1">4.2.1.130</ecNumber>
    </recommendedName>
    <alternativeName>
        <fullName evidence="1">Glyoxalase 3 homolog 3</fullName>
    </alternativeName>
    <alternativeName>
        <fullName evidence="1">Heat shock protein 31 homolog 3</fullName>
    </alternativeName>
</protein>
<dbReference type="EC" id="4.2.1.130" evidence="1"/>
<dbReference type="EMBL" id="CU329671">
    <property type="protein sequence ID" value="CAA17037.1"/>
    <property type="molecule type" value="Genomic_DNA"/>
</dbReference>
<dbReference type="PIR" id="T40773">
    <property type="entry name" value="T40773"/>
</dbReference>
<dbReference type="RefSeq" id="NP_595267.1">
    <property type="nucleotide sequence ID" value="NM_001021174.2"/>
</dbReference>
<dbReference type="SMR" id="O43084"/>
<dbReference type="BioGRID" id="277807">
    <property type="interactions" value="7"/>
</dbReference>
<dbReference type="FunCoup" id="O43084">
    <property type="interactions" value="332"/>
</dbReference>
<dbReference type="STRING" id="284812.O43084"/>
<dbReference type="PaxDb" id="4896-SPBC947.09.1"/>
<dbReference type="EnsemblFungi" id="SPBC947.09.1">
    <property type="protein sequence ID" value="SPBC947.09.1:pep"/>
    <property type="gene ID" value="SPBC947.09"/>
</dbReference>
<dbReference type="GeneID" id="2541295"/>
<dbReference type="KEGG" id="spo:2541295"/>
<dbReference type="PomBase" id="SPBC947.09">
    <property type="gene designation" value="hsp3103"/>
</dbReference>
<dbReference type="VEuPathDB" id="FungiDB:SPBC947.09"/>
<dbReference type="eggNOG" id="ENOG502RZ3Y">
    <property type="taxonomic scope" value="Eukaryota"/>
</dbReference>
<dbReference type="HOGENOM" id="CLU_070319_1_0_1"/>
<dbReference type="InParanoid" id="O43084"/>
<dbReference type="OMA" id="WKRVETH"/>
<dbReference type="PhylomeDB" id="O43084"/>
<dbReference type="PRO" id="PR:O43084"/>
<dbReference type="Proteomes" id="UP000002485">
    <property type="component" value="Chromosome II"/>
</dbReference>
<dbReference type="GO" id="GO:0005737">
    <property type="term" value="C:cytoplasm"/>
    <property type="evidence" value="ECO:0000318"/>
    <property type="project" value="GO_Central"/>
</dbReference>
<dbReference type="GO" id="GO:0019172">
    <property type="term" value="F:glyoxalase III activity"/>
    <property type="evidence" value="ECO:0000318"/>
    <property type="project" value="GO_Central"/>
</dbReference>
<dbReference type="GO" id="GO:0019243">
    <property type="term" value="P:methylglyoxal catabolic process to D-lactate via S-lactoyl-glutathione"/>
    <property type="evidence" value="ECO:0000318"/>
    <property type="project" value="GO_Central"/>
</dbReference>
<dbReference type="CDD" id="cd03147">
    <property type="entry name" value="GATase1_Ydr533c_like"/>
    <property type="match status" value="1"/>
</dbReference>
<dbReference type="FunFam" id="3.40.50.880:FF:000051">
    <property type="entry name" value="Glutathione-independent glyoxalase HSP31"/>
    <property type="match status" value="1"/>
</dbReference>
<dbReference type="Gene3D" id="3.40.50.880">
    <property type="match status" value="1"/>
</dbReference>
<dbReference type="InterPro" id="IPR029062">
    <property type="entry name" value="Class_I_gatase-like"/>
</dbReference>
<dbReference type="InterPro" id="IPR002818">
    <property type="entry name" value="DJ-1/PfpI"/>
</dbReference>
<dbReference type="InterPro" id="IPR050325">
    <property type="entry name" value="Prot/Nucl_acid_deglycase"/>
</dbReference>
<dbReference type="PANTHER" id="PTHR48094:SF11">
    <property type="entry name" value="GLUTATHIONE-INDEPENDENT GLYOXALASE HSP31-RELATED"/>
    <property type="match status" value="1"/>
</dbReference>
<dbReference type="PANTHER" id="PTHR48094">
    <property type="entry name" value="PROTEIN/NUCLEIC ACID DEGLYCASE DJ-1-RELATED"/>
    <property type="match status" value="1"/>
</dbReference>
<dbReference type="Pfam" id="PF01965">
    <property type="entry name" value="DJ-1_PfpI"/>
    <property type="match status" value="1"/>
</dbReference>
<dbReference type="SUPFAM" id="SSF52317">
    <property type="entry name" value="Class I glutamine amidotransferase-like"/>
    <property type="match status" value="1"/>
</dbReference>
<accession>O43084</accession>
<name>HSP33_SCHPO</name>
<feature type="chain" id="PRO_0000317305" description="Probable glutathione-independent glyoxalase hsp3103">
    <location>
        <begin position="1"/>
        <end position="261"/>
    </location>
</feature>
<feature type="active site" evidence="2">
    <location>
        <position position="162"/>
    </location>
</feature>
<feature type="active site" evidence="2">
    <location>
        <position position="163"/>
    </location>
</feature>
<feature type="active site" evidence="2">
    <location>
        <position position="196"/>
    </location>
</feature>
<keyword id="KW-0456">Lyase</keyword>
<keyword id="KW-1185">Reference proteome</keyword>
<keyword id="KW-0346">Stress response</keyword>
<proteinExistence type="inferred from homology"/>
<comment type="function">
    <text evidence="1 2">Catalyzes the conversion of methylglyoxal (MG) to D-lactate in a single glutathione (GSH)-independent step. May play a role in detoxifying endogenously produced glyoxals. Involved in protection against reactive oxygen species (ROS).</text>
</comment>
<comment type="catalytic activity">
    <reaction evidence="1">
        <text>methylglyoxal + H2O = (R)-lactate + H(+)</text>
        <dbReference type="Rhea" id="RHEA:27754"/>
        <dbReference type="ChEBI" id="CHEBI:15377"/>
        <dbReference type="ChEBI" id="CHEBI:15378"/>
        <dbReference type="ChEBI" id="CHEBI:16004"/>
        <dbReference type="ChEBI" id="CHEBI:17158"/>
        <dbReference type="EC" id="4.2.1.130"/>
    </reaction>
</comment>
<comment type="similarity">
    <text evidence="4">Belongs to the peptidase C56 family. HSP31-like subfamily.</text>
</comment>
<gene>
    <name evidence="3" type="primary">hsp3103</name>
    <name evidence="5" type="ORF">SPBC947.09</name>
</gene>
<reference key="1">
    <citation type="journal article" date="2002" name="Nature">
        <title>The genome sequence of Schizosaccharomyces pombe.</title>
        <authorList>
            <person name="Wood V."/>
            <person name="Gwilliam R."/>
            <person name="Rajandream M.A."/>
            <person name="Lyne M.H."/>
            <person name="Lyne R."/>
            <person name="Stewart A."/>
            <person name="Sgouros J.G."/>
            <person name="Peat N."/>
            <person name="Hayles J."/>
            <person name="Baker S.G."/>
            <person name="Basham D."/>
            <person name="Bowman S."/>
            <person name="Brooks K."/>
            <person name="Brown D."/>
            <person name="Brown S."/>
            <person name="Chillingworth T."/>
            <person name="Churcher C.M."/>
            <person name="Collins M."/>
            <person name="Connor R."/>
            <person name="Cronin A."/>
            <person name="Davis P."/>
            <person name="Feltwell T."/>
            <person name="Fraser A."/>
            <person name="Gentles S."/>
            <person name="Goble A."/>
            <person name="Hamlin N."/>
            <person name="Harris D.E."/>
            <person name="Hidalgo J."/>
            <person name="Hodgson G."/>
            <person name="Holroyd S."/>
            <person name="Hornsby T."/>
            <person name="Howarth S."/>
            <person name="Huckle E.J."/>
            <person name="Hunt S."/>
            <person name="Jagels K."/>
            <person name="James K.D."/>
            <person name="Jones L."/>
            <person name="Jones M."/>
            <person name="Leather S."/>
            <person name="McDonald S."/>
            <person name="McLean J."/>
            <person name="Mooney P."/>
            <person name="Moule S."/>
            <person name="Mungall K.L."/>
            <person name="Murphy L.D."/>
            <person name="Niblett D."/>
            <person name="Odell C."/>
            <person name="Oliver K."/>
            <person name="O'Neil S."/>
            <person name="Pearson D."/>
            <person name="Quail M.A."/>
            <person name="Rabbinowitsch E."/>
            <person name="Rutherford K.M."/>
            <person name="Rutter S."/>
            <person name="Saunders D."/>
            <person name="Seeger K."/>
            <person name="Sharp S."/>
            <person name="Skelton J."/>
            <person name="Simmonds M.N."/>
            <person name="Squares R."/>
            <person name="Squares S."/>
            <person name="Stevens K."/>
            <person name="Taylor K."/>
            <person name="Taylor R.G."/>
            <person name="Tivey A."/>
            <person name="Walsh S.V."/>
            <person name="Warren T."/>
            <person name="Whitehead S."/>
            <person name="Woodward J.R."/>
            <person name="Volckaert G."/>
            <person name="Aert R."/>
            <person name="Robben J."/>
            <person name="Grymonprez B."/>
            <person name="Weltjens I."/>
            <person name="Vanstreels E."/>
            <person name="Rieger M."/>
            <person name="Schaefer M."/>
            <person name="Mueller-Auer S."/>
            <person name="Gabel C."/>
            <person name="Fuchs M."/>
            <person name="Duesterhoeft A."/>
            <person name="Fritzc C."/>
            <person name="Holzer E."/>
            <person name="Moestl D."/>
            <person name="Hilbert H."/>
            <person name="Borzym K."/>
            <person name="Langer I."/>
            <person name="Beck A."/>
            <person name="Lehrach H."/>
            <person name="Reinhardt R."/>
            <person name="Pohl T.M."/>
            <person name="Eger P."/>
            <person name="Zimmermann W."/>
            <person name="Wedler H."/>
            <person name="Wambutt R."/>
            <person name="Purnelle B."/>
            <person name="Goffeau A."/>
            <person name="Cadieu E."/>
            <person name="Dreano S."/>
            <person name="Gloux S."/>
            <person name="Lelaure V."/>
            <person name="Mottier S."/>
            <person name="Galibert F."/>
            <person name="Aves S.J."/>
            <person name="Xiang Z."/>
            <person name="Hunt C."/>
            <person name="Moore K."/>
            <person name="Hurst S.M."/>
            <person name="Lucas M."/>
            <person name="Rochet M."/>
            <person name="Gaillardin C."/>
            <person name="Tallada V.A."/>
            <person name="Garzon A."/>
            <person name="Thode G."/>
            <person name="Daga R.R."/>
            <person name="Cruzado L."/>
            <person name="Jimenez J."/>
            <person name="Sanchez M."/>
            <person name="del Rey F."/>
            <person name="Benito J."/>
            <person name="Dominguez A."/>
            <person name="Revuelta J.L."/>
            <person name="Moreno S."/>
            <person name="Armstrong J."/>
            <person name="Forsburg S.L."/>
            <person name="Cerutti L."/>
            <person name="Lowe T."/>
            <person name="McCombie W.R."/>
            <person name="Paulsen I."/>
            <person name="Potashkin J."/>
            <person name="Shpakovski G.V."/>
            <person name="Ussery D."/>
            <person name="Barrell B.G."/>
            <person name="Nurse P."/>
        </authorList>
    </citation>
    <scope>NUCLEOTIDE SEQUENCE [LARGE SCALE GENOMIC DNA]</scope>
    <source>
        <strain>972 / ATCC 24843</strain>
    </source>
</reference>
<reference key="2">
    <citation type="journal article" date="2014" name="BMC Evol. Biol.">
        <title>Identification of glutathione (GSH)-independent glyoxalase III from Schizosaccharomyces pombe.</title>
        <authorList>
            <person name="Zhao Q."/>
            <person name="Su Y."/>
            <person name="Wang Z."/>
            <person name="Chen C."/>
            <person name="Wu T."/>
            <person name="Huang Y."/>
        </authorList>
    </citation>
    <scope>GENE NAME</scope>
</reference>
<evidence type="ECO:0000250" key="1">
    <source>
        <dbReference type="UniProtKB" id="O74914"/>
    </source>
</evidence>
<evidence type="ECO:0000250" key="2">
    <source>
        <dbReference type="UniProtKB" id="Q04432"/>
    </source>
</evidence>
<evidence type="ECO:0000303" key="3">
    <source>
    </source>
</evidence>
<evidence type="ECO:0000305" key="4"/>
<evidence type="ECO:0000312" key="5">
    <source>
        <dbReference type="PomBase" id="SPBC947.09"/>
    </source>
</evidence>
<sequence>MPAKTRNVLIACSDYYGPFYKDGENTGAFFLELLHPYLVFRDACFNVDIVTESGKIQFDDHSVAGPAIDKGSKGEEFLSYDDHIASGPELSKAEKYVLENKDDMFWRIVQNSKTADEVNPDKYDIFFVAGGHATLFDFPKATNLQKLGTSIYENGGVVAAVCHGPTLLPFMKRQTSDGSVSIVCGKDVTAFDRVAEDKSKLMEALKKYNLEVLDDMLNDAGANFIKSPNPFGDFVIADGRLVTGSNPASATSTAKTALRVL</sequence>